<protein>
    <recommendedName>
        <fullName evidence="1">GTPase Obg</fullName>
        <ecNumber evidence="1">3.6.5.-</ecNumber>
    </recommendedName>
    <alternativeName>
        <fullName evidence="1">GTP-binding protein Obg</fullName>
    </alternativeName>
</protein>
<keyword id="KW-0067">ATP-binding</keyword>
<keyword id="KW-0963">Cytoplasm</keyword>
<keyword id="KW-0342">GTP-binding</keyword>
<keyword id="KW-0378">Hydrolase</keyword>
<keyword id="KW-0460">Magnesium</keyword>
<keyword id="KW-0479">Metal-binding</keyword>
<keyword id="KW-0547">Nucleotide-binding</keyword>
<keyword id="KW-1185">Reference proteome</keyword>
<accession>A5GNK6</accession>
<comment type="function">
    <text evidence="1">An essential GTPase which binds GTP, GDP and possibly (p)ppGpp with moderate affinity, with high nucleotide exchange rates and a fairly low GTP hydrolysis rate. Plays a role in control of the cell cycle, stress response, ribosome biogenesis and in those bacteria that undergo differentiation, in morphogenesis control.</text>
</comment>
<comment type="cofactor">
    <cofactor evidence="1">
        <name>Mg(2+)</name>
        <dbReference type="ChEBI" id="CHEBI:18420"/>
    </cofactor>
</comment>
<comment type="subunit">
    <text evidence="1">Monomer.</text>
</comment>
<comment type="subcellular location">
    <subcellularLocation>
        <location evidence="1">Cytoplasm</location>
    </subcellularLocation>
</comment>
<comment type="similarity">
    <text evidence="1">Belongs to the TRAFAC class OBG-HflX-like GTPase superfamily. OBG GTPase family.</text>
</comment>
<dbReference type="EC" id="3.6.5.-" evidence="1"/>
<dbReference type="EMBL" id="CT971583">
    <property type="protein sequence ID" value="CAK24521.1"/>
    <property type="molecule type" value="Genomic_DNA"/>
</dbReference>
<dbReference type="SMR" id="A5GNK6"/>
<dbReference type="STRING" id="32051.SynWH7803_2095"/>
<dbReference type="KEGG" id="syx:SynWH7803_2095"/>
<dbReference type="eggNOG" id="COG0536">
    <property type="taxonomic scope" value="Bacteria"/>
</dbReference>
<dbReference type="HOGENOM" id="CLU_011747_2_0_3"/>
<dbReference type="OrthoDB" id="9807318at2"/>
<dbReference type="Proteomes" id="UP000001566">
    <property type="component" value="Chromosome"/>
</dbReference>
<dbReference type="GO" id="GO:0005737">
    <property type="term" value="C:cytoplasm"/>
    <property type="evidence" value="ECO:0007669"/>
    <property type="project" value="UniProtKB-SubCell"/>
</dbReference>
<dbReference type="GO" id="GO:0005524">
    <property type="term" value="F:ATP binding"/>
    <property type="evidence" value="ECO:0007669"/>
    <property type="project" value="UniProtKB-KW"/>
</dbReference>
<dbReference type="GO" id="GO:0005525">
    <property type="term" value="F:GTP binding"/>
    <property type="evidence" value="ECO:0007669"/>
    <property type="project" value="UniProtKB-UniRule"/>
</dbReference>
<dbReference type="GO" id="GO:0003924">
    <property type="term" value="F:GTPase activity"/>
    <property type="evidence" value="ECO:0007669"/>
    <property type="project" value="UniProtKB-UniRule"/>
</dbReference>
<dbReference type="GO" id="GO:0000287">
    <property type="term" value="F:magnesium ion binding"/>
    <property type="evidence" value="ECO:0007669"/>
    <property type="project" value="InterPro"/>
</dbReference>
<dbReference type="GO" id="GO:0042254">
    <property type="term" value="P:ribosome biogenesis"/>
    <property type="evidence" value="ECO:0007669"/>
    <property type="project" value="UniProtKB-UniRule"/>
</dbReference>
<dbReference type="CDD" id="cd01898">
    <property type="entry name" value="Obg"/>
    <property type="match status" value="1"/>
</dbReference>
<dbReference type="FunFam" id="2.70.210.12:FF:000001">
    <property type="entry name" value="GTPase Obg"/>
    <property type="match status" value="1"/>
</dbReference>
<dbReference type="Gene3D" id="2.70.210.12">
    <property type="entry name" value="GTP1/OBG domain"/>
    <property type="match status" value="1"/>
</dbReference>
<dbReference type="Gene3D" id="3.40.50.300">
    <property type="entry name" value="P-loop containing nucleotide triphosphate hydrolases"/>
    <property type="match status" value="1"/>
</dbReference>
<dbReference type="HAMAP" id="MF_01454">
    <property type="entry name" value="GTPase_Obg"/>
    <property type="match status" value="1"/>
</dbReference>
<dbReference type="InterPro" id="IPR031167">
    <property type="entry name" value="G_OBG"/>
</dbReference>
<dbReference type="InterPro" id="IPR006073">
    <property type="entry name" value="GTP-bd"/>
</dbReference>
<dbReference type="InterPro" id="IPR014100">
    <property type="entry name" value="GTP-bd_Obg/CgtA"/>
</dbReference>
<dbReference type="InterPro" id="IPR006169">
    <property type="entry name" value="GTP1_OBG_dom"/>
</dbReference>
<dbReference type="InterPro" id="IPR036726">
    <property type="entry name" value="GTP1_OBG_dom_sf"/>
</dbReference>
<dbReference type="InterPro" id="IPR045086">
    <property type="entry name" value="OBG_GTPase"/>
</dbReference>
<dbReference type="InterPro" id="IPR027417">
    <property type="entry name" value="P-loop_NTPase"/>
</dbReference>
<dbReference type="NCBIfam" id="TIGR02729">
    <property type="entry name" value="Obg_CgtA"/>
    <property type="match status" value="1"/>
</dbReference>
<dbReference type="NCBIfam" id="NF008955">
    <property type="entry name" value="PRK12297.1"/>
    <property type="match status" value="1"/>
</dbReference>
<dbReference type="NCBIfam" id="NF008956">
    <property type="entry name" value="PRK12299.1"/>
    <property type="match status" value="1"/>
</dbReference>
<dbReference type="PANTHER" id="PTHR11702">
    <property type="entry name" value="DEVELOPMENTALLY REGULATED GTP-BINDING PROTEIN-RELATED"/>
    <property type="match status" value="1"/>
</dbReference>
<dbReference type="PANTHER" id="PTHR11702:SF31">
    <property type="entry name" value="MITOCHONDRIAL RIBOSOME-ASSOCIATED GTPASE 2"/>
    <property type="match status" value="1"/>
</dbReference>
<dbReference type="Pfam" id="PF01018">
    <property type="entry name" value="GTP1_OBG"/>
    <property type="match status" value="1"/>
</dbReference>
<dbReference type="Pfam" id="PF01926">
    <property type="entry name" value="MMR_HSR1"/>
    <property type="match status" value="1"/>
</dbReference>
<dbReference type="PIRSF" id="PIRSF002401">
    <property type="entry name" value="GTP_bd_Obg/CgtA"/>
    <property type="match status" value="1"/>
</dbReference>
<dbReference type="PRINTS" id="PR00326">
    <property type="entry name" value="GTP1OBG"/>
</dbReference>
<dbReference type="SUPFAM" id="SSF82051">
    <property type="entry name" value="Obg GTP-binding protein N-terminal domain"/>
    <property type="match status" value="1"/>
</dbReference>
<dbReference type="SUPFAM" id="SSF52540">
    <property type="entry name" value="P-loop containing nucleoside triphosphate hydrolases"/>
    <property type="match status" value="1"/>
</dbReference>
<dbReference type="PROSITE" id="PS51710">
    <property type="entry name" value="G_OBG"/>
    <property type="match status" value="1"/>
</dbReference>
<dbReference type="PROSITE" id="PS51883">
    <property type="entry name" value="OBG"/>
    <property type="match status" value="1"/>
</dbReference>
<organism>
    <name type="scientific">Synechococcus sp. (strain WH7803)</name>
    <dbReference type="NCBI Taxonomy" id="32051"/>
    <lineage>
        <taxon>Bacteria</taxon>
        <taxon>Bacillati</taxon>
        <taxon>Cyanobacteriota</taxon>
        <taxon>Cyanophyceae</taxon>
        <taxon>Synechococcales</taxon>
        <taxon>Synechococcaceae</taxon>
        <taxon>Synechococcus</taxon>
    </lineage>
</organism>
<evidence type="ECO:0000255" key="1">
    <source>
        <dbReference type="HAMAP-Rule" id="MF_01454"/>
    </source>
</evidence>
<evidence type="ECO:0000255" key="2">
    <source>
        <dbReference type="PROSITE-ProRule" id="PRU01231"/>
    </source>
</evidence>
<gene>
    <name evidence="1" type="primary">obg</name>
    <name type="ordered locus">SynWH7803_2095</name>
</gene>
<name>OBG_SYNPW</name>
<reference key="1">
    <citation type="submission" date="2006-05" db="EMBL/GenBank/DDBJ databases">
        <authorList>
            <consortium name="Genoscope"/>
        </authorList>
    </citation>
    <scope>NUCLEOTIDE SEQUENCE [LARGE SCALE GENOMIC DNA]</scope>
    <source>
        <strain>WH7803</strain>
    </source>
</reference>
<proteinExistence type="inferred from homology"/>
<sequence length="329" mass="35009">MQFIDQARITVRGGRGGDGIVAFRREKYVPAGGPSGGDGGHGADVVLEADSNLQTLLDFKYKRLFAAIDGRRGGPNRCTGASGQPLVIKVPCGTEVRHLTTGILLGDLTNPGERLTVAFGGRGGLGNAHYLSNRNRAPEKCTEGRDGEEWPLQLELKLLAEVGIIGLPNAGKSTLISVLSAARPKIADYPFTTLVPNLGVVRRPSGDGTVFADIPGLIAGAAQGAGLGHDFLRHIERTRLLIHLVDSGADDPVGDLRVVEKELEAYGHGLVSRPRLLVLNKLELLDEQGRDDLLERLEASSGHRPLLISAVMGKGLDALLDQVWQLLGV</sequence>
<feature type="chain" id="PRO_0000386340" description="GTPase Obg">
    <location>
        <begin position="1"/>
        <end position="329"/>
    </location>
</feature>
<feature type="domain" description="Obg" evidence="2">
    <location>
        <begin position="1"/>
        <end position="159"/>
    </location>
</feature>
<feature type="domain" description="OBG-type G" evidence="1">
    <location>
        <begin position="160"/>
        <end position="328"/>
    </location>
</feature>
<feature type="binding site" evidence="1">
    <location>
        <begin position="166"/>
        <end position="173"/>
    </location>
    <ligand>
        <name>ATP</name>
        <dbReference type="ChEBI" id="CHEBI:30616"/>
    </ligand>
</feature>
<feature type="binding site" evidence="1">
    <location>
        <position position="173"/>
    </location>
    <ligand>
        <name>Mg(2+)</name>
        <dbReference type="ChEBI" id="CHEBI:18420"/>
    </ligand>
</feature>
<feature type="binding site" evidence="1">
    <location>
        <begin position="191"/>
        <end position="195"/>
    </location>
    <ligand>
        <name>ATP</name>
        <dbReference type="ChEBI" id="CHEBI:30616"/>
    </ligand>
</feature>
<feature type="binding site" evidence="1">
    <location>
        <position position="193"/>
    </location>
    <ligand>
        <name>Mg(2+)</name>
        <dbReference type="ChEBI" id="CHEBI:18420"/>
    </ligand>
</feature>
<feature type="binding site" evidence="1">
    <location>
        <begin position="213"/>
        <end position="216"/>
    </location>
    <ligand>
        <name>ATP</name>
        <dbReference type="ChEBI" id="CHEBI:30616"/>
    </ligand>
</feature>
<feature type="binding site" evidence="1">
    <location>
        <begin position="280"/>
        <end position="283"/>
    </location>
    <ligand>
        <name>ATP</name>
        <dbReference type="ChEBI" id="CHEBI:30616"/>
    </ligand>
</feature>
<feature type="binding site" evidence="1">
    <location>
        <begin position="309"/>
        <end position="311"/>
    </location>
    <ligand>
        <name>ATP</name>
        <dbReference type="ChEBI" id="CHEBI:30616"/>
    </ligand>
</feature>